<sequence>MIAAQAKLVYHLNKYYNEKCQARKAAIAKTIREVCKVVSDVLKEVEVQEPRFISSLNEMDNRYEGLEVISPTEFEVVLYLNQMGVFNFVDDGSLPGCAVLKLSDGRKRSMSLWVEFITASGYLSARKIRSRFQTLVAQAVDKCSYRDVVKMVADTSEVKLRIRDRYVVQITPAFKCTGIWPRSAAHWPLPHIPWPGPNRVAEVKAEGFNLLSKECHSLAGKQSSAESDAWVLQFAEAENRLQMGGCRKKCLSILKTLRDRHLELPGQPLNNYHMKTLVSYECEKHPRESDWDESCLGDRLNGILLQLISCLQCRRCPHYFLPNLDLFQGKPHSALENAAKQTWRLAREILTNPKSLEKL</sequence>
<dbReference type="EC" id="2.7.7.-" evidence="9"/>
<dbReference type="EMBL" id="AF040945">
    <property type="protein sequence ID" value="AAC15636.1"/>
    <property type="molecule type" value="mRNA"/>
</dbReference>
<dbReference type="EMBL" id="AF228913">
    <property type="protein sequence ID" value="AAF67140.1"/>
    <property type="molecule type" value="mRNA"/>
</dbReference>
<dbReference type="EMBL" id="AK032114">
    <property type="protein sequence ID" value="BAC27711.1"/>
    <property type="molecule type" value="mRNA"/>
</dbReference>
<dbReference type="EMBL" id="BC014750">
    <property type="protein sequence ID" value="AAH14750.1"/>
    <property type="molecule type" value="mRNA"/>
</dbReference>
<dbReference type="CCDS" id="CCDS17360.1"/>
<dbReference type="RefSeq" id="NP_034880.1">
    <property type="nucleotide sequence ID" value="NM_010750.3"/>
</dbReference>
<dbReference type="SMR" id="O70299"/>
<dbReference type="FunCoup" id="O70299">
    <property type="interactions" value="1621"/>
</dbReference>
<dbReference type="STRING" id="10090.ENSMUSP00000074878"/>
<dbReference type="PhosphoSitePlus" id="O70299"/>
<dbReference type="PaxDb" id="10090-ENSMUSP00000074878"/>
<dbReference type="PeptideAtlas" id="O70299"/>
<dbReference type="ProteomicsDB" id="295835"/>
<dbReference type="Pumba" id="O70299"/>
<dbReference type="TopDownProteomics" id="O70299"/>
<dbReference type="Antibodypedia" id="23045">
    <property type="antibodies" value="60 antibodies from 16 providers"/>
</dbReference>
<dbReference type="Ensembl" id="ENSMUST00000075422.6">
    <property type="protein sequence ID" value="ENSMUSP00000074878.5"/>
    <property type="gene ID" value="ENSMUSG00000056947.6"/>
</dbReference>
<dbReference type="GeneID" id="17116"/>
<dbReference type="KEGG" id="mmu:17116"/>
<dbReference type="UCSC" id="uc008pgv.2">
    <property type="organism name" value="mouse"/>
</dbReference>
<dbReference type="AGR" id="MGI:1333773"/>
<dbReference type="CTD" id="4081"/>
<dbReference type="MGI" id="MGI:1333773">
    <property type="gene designation" value="Mab21l1"/>
</dbReference>
<dbReference type="VEuPathDB" id="HostDB:ENSMUSG00000056947"/>
<dbReference type="eggNOG" id="KOG3963">
    <property type="taxonomic scope" value="Eukaryota"/>
</dbReference>
<dbReference type="GeneTree" id="ENSGT01050000244827"/>
<dbReference type="HOGENOM" id="CLU_045315_0_0_1"/>
<dbReference type="InParanoid" id="O70299"/>
<dbReference type="OMA" id="RESIYMK"/>
<dbReference type="OrthoDB" id="5961151at2759"/>
<dbReference type="PhylomeDB" id="O70299"/>
<dbReference type="TreeFam" id="TF315012"/>
<dbReference type="BioGRID-ORCS" id="17116">
    <property type="hits" value="3 hits in 76 CRISPR screens"/>
</dbReference>
<dbReference type="PRO" id="PR:O70299"/>
<dbReference type="Proteomes" id="UP000000589">
    <property type="component" value="Chromosome 3"/>
</dbReference>
<dbReference type="RNAct" id="O70299">
    <property type="molecule type" value="protein"/>
</dbReference>
<dbReference type="Bgee" id="ENSMUSG00000056947">
    <property type="expression patterns" value="Expressed in epithelium of lens and 133 other cell types or tissues"/>
</dbReference>
<dbReference type="GO" id="GO:0005634">
    <property type="term" value="C:nucleus"/>
    <property type="evidence" value="ECO:0000314"/>
    <property type="project" value="MGI"/>
</dbReference>
<dbReference type="GO" id="GO:0046872">
    <property type="term" value="F:metal ion binding"/>
    <property type="evidence" value="ECO:0007669"/>
    <property type="project" value="UniProtKB-KW"/>
</dbReference>
<dbReference type="GO" id="GO:0000166">
    <property type="term" value="F:nucleotide binding"/>
    <property type="evidence" value="ECO:0007669"/>
    <property type="project" value="UniProtKB-KW"/>
</dbReference>
<dbReference type="GO" id="GO:0016779">
    <property type="term" value="F:nucleotidyltransferase activity"/>
    <property type="evidence" value="ECO:0007669"/>
    <property type="project" value="UniProtKB-KW"/>
</dbReference>
<dbReference type="GO" id="GO:0043010">
    <property type="term" value="P:camera-type eye development"/>
    <property type="evidence" value="ECO:0000315"/>
    <property type="project" value="MGI"/>
</dbReference>
<dbReference type="GO" id="GO:0008283">
    <property type="term" value="P:cell population proliferation"/>
    <property type="evidence" value="ECO:0000315"/>
    <property type="project" value="MGI"/>
</dbReference>
<dbReference type="GO" id="GO:0001654">
    <property type="term" value="P:eye development"/>
    <property type="evidence" value="ECO:0000250"/>
    <property type="project" value="UniProtKB"/>
</dbReference>
<dbReference type="GO" id="GO:0008284">
    <property type="term" value="P:positive regulation of cell population proliferation"/>
    <property type="evidence" value="ECO:0000315"/>
    <property type="project" value="MGI"/>
</dbReference>
<dbReference type="FunFam" id="1.10.1410.40:FF:000002">
    <property type="entry name" value="protein mab-21-like 1"/>
    <property type="match status" value="1"/>
</dbReference>
<dbReference type="FunFam" id="3.30.460.90:FF:000001">
    <property type="entry name" value="protein mab-21-like 2"/>
    <property type="match status" value="1"/>
</dbReference>
<dbReference type="Gene3D" id="1.10.1410.40">
    <property type="match status" value="1"/>
</dbReference>
<dbReference type="Gene3D" id="3.30.460.90">
    <property type="match status" value="1"/>
</dbReference>
<dbReference type="InterPro" id="IPR046903">
    <property type="entry name" value="Mab-21-like_nuc_Trfase"/>
</dbReference>
<dbReference type="InterPro" id="IPR046906">
    <property type="entry name" value="Mab-21_HhH/H2TH-like"/>
</dbReference>
<dbReference type="InterPro" id="IPR024810">
    <property type="entry name" value="MAB21L/cGLR"/>
</dbReference>
<dbReference type="PANTHER" id="PTHR10656">
    <property type="entry name" value="CELL FATE DETERMINING PROTEIN MAB21-RELATED"/>
    <property type="match status" value="1"/>
</dbReference>
<dbReference type="PANTHER" id="PTHR10656:SF38">
    <property type="entry name" value="NUCLEOTIDYLTRANSFERASE MAB21L1-RELATED"/>
    <property type="match status" value="1"/>
</dbReference>
<dbReference type="Pfam" id="PF03281">
    <property type="entry name" value="Mab-21"/>
    <property type="match status" value="1"/>
</dbReference>
<dbReference type="Pfam" id="PF20266">
    <property type="entry name" value="Mab-21_C"/>
    <property type="match status" value="1"/>
</dbReference>
<dbReference type="SMART" id="SM01265">
    <property type="entry name" value="Mab-21"/>
    <property type="match status" value="1"/>
</dbReference>
<feature type="chain" id="PRO_0000312782" description="Putative nucleotidyltransferase MAB21L1">
    <location>
        <begin position="1"/>
        <end position="359"/>
    </location>
</feature>
<feature type="binding site" evidence="1">
    <location>
        <begin position="23"/>
        <end position="24"/>
    </location>
    <ligand>
        <name>a ribonucleoside 5'-triphosphate</name>
        <dbReference type="ChEBI" id="CHEBI:61557"/>
    </ligand>
</feature>
<feature type="binding site" evidence="1">
    <location>
        <begin position="63"/>
        <end position="66"/>
    </location>
    <ligand>
        <name>a ribonucleoside 5'-triphosphate</name>
        <dbReference type="ChEBI" id="CHEBI:61557"/>
    </ligand>
</feature>
<feature type="binding site" evidence="2">
    <location>
        <position position="73"/>
    </location>
    <ligand>
        <name>Mg(2+)</name>
        <dbReference type="ChEBI" id="CHEBI:18420"/>
        <note>catalytic</note>
    </ligand>
</feature>
<feature type="binding site" evidence="2">
    <location>
        <position position="75"/>
    </location>
    <ligand>
        <name>Mg(2+)</name>
        <dbReference type="ChEBI" id="CHEBI:18420"/>
        <note>catalytic</note>
    </ligand>
</feature>
<feature type="binding site" evidence="1">
    <location>
        <position position="248"/>
    </location>
    <ligand>
        <name>a ribonucleoside 5'-triphosphate</name>
        <dbReference type="ChEBI" id="CHEBI:61557"/>
    </ligand>
</feature>
<feature type="binding site" evidence="1">
    <location>
        <begin position="252"/>
        <end position="255"/>
    </location>
    <ligand>
        <name>a ribonucleoside 5'-triphosphate</name>
        <dbReference type="ChEBI" id="CHEBI:61557"/>
    </ligand>
</feature>
<gene>
    <name type="primary">Mab21l1</name>
    <name type="synonym">Mab21</name>
</gene>
<keyword id="KW-0217">Developmental protein</keyword>
<keyword id="KW-0460">Magnesium</keyword>
<keyword id="KW-0479">Metal-binding</keyword>
<keyword id="KW-0547">Nucleotide-binding</keyword>
<keyword id="KW-0548">Nucleotidyltransferase</keyword>
<keyword id="KW-0539">Nucleus</keyword>
<keyword id="KW-1185">Reference proteome</keyword>
<keyword id="KW-0808">Transferase</keyword>
<organism>
    <name type="scientific">Mus musculus</name>
    <name type="common">Mouse</name>
    <dbReference type="NCBI Taxonomy" id="10090"/>
    <lineage>
        <taxon>Eukaryota</taxon>
        <taxon>Metazoa</taxon>
        <taxon>Chordata</taxon>
        <taxon>Craniata</taxon>
        <taxon>Vertebrata</taxon>
        <taxon>Euteleostomi</taxon>
        <taxon>Mammalia</taxon>
        <taxon>Eutheria</taxon>
        <taxon>Euarchontoglires</taxon>
        <taxon>Glires</taxon>
        <taxon>Rodentia</taxon>
        <taxon>Myomorpha</taxon>
        <taxon>Muroidea</taxon>
        <taxon>Muridae</taxon>
        <taxon>Murinae</taxon>
        <taxon>Mus</taxon>
        <taxon>Mus</taxon>
    </lineage>
</organism>
<evidence type="ECO:0000250" key="1">
    <source>
        <dbReference type="UniProtKB" id="Q13394"/>
    </source>
</evidence>
<evidence type="ECO:0000250" key="2">
    <source>
        <dbReference type="UniProtKB" id="Q8N884"/>
    </source>
</evidence>
<evidence type="ECO:0000269" key="3">
    <source>
    </source>
</evidence>
<evidence type="ECO:0000269" key="4">
    <source>
    </source>
</evidence>
<evidence type="ECO:0000269" key="5">
    <source>
    </source>
</evidence>
<evidence type="ECO:0000269" key="6">
    <source>
    </source>
</evidence>
<evidence type="ECO:0000269" key="7">
    <source>
    </source>
</evidence>
<evidence type="ECO:0000269" key="8">
    <source>
    </source>
</evidence>
<evidence type="ECO:0000305" key="9"/>
<proteinExistence type="evidence at transcript level"/>
<accession>O70299</accession>
<comment type="function">
    <text evidence="1 5 6">Putative nucleotidyltransferase required for several aspects of embryonic development including normal development of the eye, notochord, neural tube and other organ tissues, and for embryonic turning (PubMed:11857508, PubMed:12642482). It is unclear whether it displays nucleotidyltransferase activity in vivo (By similarity). Binds single-stranded RNA (ssRNA) (By similarity).</text>
</comment>
<comment type="subunit">
    <text evidence="1">Monomer. Homodecamer; composed of 2 back to back homopentamers. The protein may exist as monomer in solution and oiligomerizes upon ligand binding.</text>
</comment>
<comment type="subcellular location">
    <subcellularLocation>
        <location evidence="4">Nucleus</location>
    </subcellularLocation>
</comment>
<comment type="tissue specificity">
    <text evidence="3 4">Expressed in the adult cerebellum and eye, with lower levels in the adult forebrain.</text>
</comment>
<comment type="developmental stage">
    <text evidence="3 4 6">At 10 dpc, expressed in the temporal aspect of the retina and the anterior portion of the alar midbrain. At 10.5 dpc this retinal pattern of expression persists, with expression also beginning in the lens. Also expressed in the spinal cord, the optic cup, the presumptive lens and the genital ridge. Expressed in the dorsal midline, somites, and interdigital tissues from 9.5 dpc to 13.5 dpc.</text>
</comment>
<comment type="induction">
    <text evidence="7">Expression is down-regulated by BMP2.</text>
</comment>
<comment type="disruption phenotype">
    <text evidence="6 8">Mice show eye and preputial gland defects (PubMed:12642482). Most male mice are sterile, but they can reproduce by in vitro fertilization (PubMed:12642482). Mice display calvarial ossification characterized by an unclosed calvarial region with impaired growth of fontanelle and parietal bones during postnatal development (PubMed:29156428).</text>
</comment>
<comment type="similarity">
    <text evidence="9">Belongs to the mab-21 family.</text>
</comment>
<reference key="1">
    <citation type="journal article" date="1998" name="Mech. Dev.">
        <title>Mab21, the mouse homolog of a C. elegans cell-fate specification gene, participates in cerebellar, midbrain and eye development.</title>
        <authorList>
            <person name="Mariani M."/>
            <person name="Corradi A."/>
            <person name="Baldessari D."/>
            <person name="Malgaretti N."/>
            <person name="Pozzoli O."/>
            <person name="Fesce R."/>
            <person name="Martinez S."/>
            <person name="Boncinelli E."/>
            <person name="Consalez G.G."/>
        </authorList>
    </citation>
    <scope>NUCLEOTIDE SEQUENCE [MRNA]</scope>
    <scope>TISSUE SPECIFICITY</scope>
    <scope>DEVELOPMENTAL STAGE</scope>
</reference>
<reference key="2">
    <citation type="journal article" date="2002" name="Teratology">
        <title>Depletion of Mab21l1 and Mab21l2 messages in mouse embryo arrests axial turning, and impairs notochord and neural tube differentiation.</title>
        <authorList>
            <person name="Wong R.L.Y."/>
            <person name="Chow K.L."/>
        </authorList>
    </citation>
    <scope>NUCLEOTIDE SEQUENCE [MRNA]</scope>
    <scope>FUNCTION</scope>
</reference>
<reference key="3">
    <citation type="journal article" date="2005" name="Science">
        <title>The transcriptional landscape of the mammalian genome.</title>
        <authorList>
            <person name="Carninci P."/>
            <person name="Kasukawa T."/>
            <person name="Katayama S."/>
            <person name="Gough J."/>
            <person name="Frith M.C."/>
            <person name="Maeda N."/>
            <person name="Oyama R."/>
            <person name="Ravasi T."/>
            <person name="Lenhard B."/>
            <person name="Wells C."/>
            <person name="Kodzius R."/>
            <person name="Shimokawa K."/>
            <person name="Bajic V.B."/>
            <person name="Brenner S.E."/>
            <person name="Batalov S."/>
            <person name="Forrest A.R."/>
            <person name="Zavolan M."/>
            <person name="Davis M.J."/>
            <person name="Wilming L.G."/>
            <person name="Aidinis V."/>
            <person name="Allen J.E."/>
            <person name="Ambesi-Impiombato A."/>
            <person name="Apweiler R."/>
            <person name="Aturaliya R.N."/>
            <person name="Bailey T.L."/>
            <person name="Bansal M."/>
            <person name="Baxter L."/>
            <person name="Beisel K.W."/>
            <person name="Bersano T."/>
            <person name="Bono H."/>
            <person name="Chalk A.M."/>
            <person name="Chiu K.P."/>
            <person name="Choudhary V."/>
            <person name="Christoffels A."/>
            <person name="Clutterbuck D.R."/>
            <person name="Crowe M.L."/>
            <person name="Dalla E."/>
            <person name="Dalrymple B.P."/>
            <person name="de Bono B."/>
            <person name="Della Gatta G."/>
            <person name="di Bernardo D."/>
            <person name="Down T."/>
            <person name="Engstrom P."/>
            <person name="Fagiolini M."/>
            <person name="Faulkner G."/>
            <person name="Fletcher C.F."/>
            <person name="Fukushima T."/>
            <person name="Furuno M."/>
            <person name="Futaki S."/>
            <person name="Gariboldi M."/>
            <person name="Georgii-Hemming P."/>
            <person name="Gingeras T.R."/>
            <person name="Gojobori T."/>
            <person name="Green R.E."/>
            <person name="Gustincich S."/>
            <person name="Harbers M."/>
            <person name="Hayashi Y."/>
            <person name="Hensch T.K."/>
            <person name="Hirokawa N."/>
            <person name="Hill D."/>
            <person name="Huminiecki L."/>
            <person name="Iacono M."/>
            <person name="Ikeo K."/>
            <person name="Iwama A."/>
            <person name="Ishikawa T."/>
            <person name="Jakt M."/>
            <person name="Kanapin A."/>
            <person name="Katoh M."/>
            <person name="Kawasawa Y."/>
            <person name="Kelso J."/>
            <person name="Kitamura H."/>
            <person name="Kitano H."/>
            <person name="Kollias G."/>
            <person name="Krishnan S.P."/>
            <person name="Kruger A."/>
            <person name="Kummerfeld S.K."/>
            <person name="Kurochkin I.V."/>
            <person name="Lareau L.F."/>
            <person name="Lazarevic D."/>
            <person name="Lipovich L."/>
            <person name="Liu J."/>
            <person name="Liuni S."/>
            <person name="McWilliam S."/>
            <person name="Madan Babu M."/>
            <person name="Madera M."/>
            <person name="Marchionni L."/>
            <person name="Matsuda H."/>
            <person name="Matsuzawa S."/>
            <person name="Miki H."/>
            <person name="Mignone F."/>
            <person name="Miyake S."/>
            <person name="Morris K."/>
            <person name="Mottagui-Tabar S."/>
            <person name="Mulder N."/>
            <person name="Nakano N."/>
            <person name="Nakauchi H."/>
            <person name="Ng P."/>
            <person name="Nilsson R."/>
            <person name="Nishiguchi S."/>
            <person name="Nishikawa S."/>
            <person name="Nori F."/>
            <person name="Ohara O."/>
            <person name="Okazaki Y."/>
            <person name="Orlando V."/>
            <person name="Pang K.C."/>
            <person name="Pavan W.J."/>
            <person name="Pavesi G."/>
            <person name="Pesole G."/>
            <person name="Petrovsky N."/>
            <person name="Piazza S."/>
            <person name="Reed J."/>
            <person name="Reid J.F."/>
            <person name="Ring B.Z."/>
            <person name="Ringwald M."/>
            <person name="Rost B."/>
            <person name="Ruan Y."/>
            <person name="Salzberg S.L."/>
            <person name="Sandelin A."/>
            <person name="Schneider C."/>
            <person name="Schoenbach C."/>
            <person name="Sekiguchi K."/>
            <person name="Semple C.A."/>
            <person name="Seno S."/>
            <person name="Sessa L."/>
            <person name="Sheng Y."/>
            <person name="Shibata Y."/>
            <person name="Shimada H."/>
            <person name="Shimada K."/>
            <person name="Silva D."/>
            <person name="Sinclair B."/>
            <person name="Sperling S."/>
            <person name="Stupka E."/>
            <person name="Sugiura K."/>
            <person name="Sultana R."/>
            <person name="Takenaka Y."/>
            <person name="Taki K."/>
            <person name="Tammoja K."/>
            <person name="Tan S.L."/>
            <person name="Tang S."/>
            <person name="Taylor M.S."/>
            <person name="Tegner J."/>
            <person name="Teichmann S.A."/>
            <person name="Ueda H.R."/>
            <person name="van Nimwegen E."/>
            <person name="Verardo R."/>
            <person name="Wei C.L."/>
            <person name="Yagi K."/>
            <person name="Yamanishi H."/>
            <person name="Zabarovsky E."/>
            <person name="Zhu S."/>
            <person name="Zimmer A."/>
            <person name="Hide W."/>
            <person name="Bult C."/>
            <person name="Grimmond S.M."/>
            <person name="Teasdale R.D."/>
            <person name="Liu E.T."/>
            <person name="Brusic V."/>
            <person name="Quackenbush J."/>
            <person name="Wahlestedt C."/>
            <person name="Mattick J.S."/>
            <person name="Hume D.A."/>
            <person name="Kai C."/>
            <person name="Sasaki D."/>
            <person name="Tomaru Y."/>
            <person name="Fukuda S."/>
            <person name="Kanamori-Katayama M."/>
            <person name="Suzuki M."/>
            <person name="Aoki J."/>
            <person name="Arakawa T."/>
            <person name="Iida J."/>
            <person name="Imamura K."/>
            <person name="Itoh M."/>
            <person name="Kato T."/>
            <person name="Kawaji H."/>
            <person name="Kawagashira N."/>
            <person name="Kawashima T."/>
            <person name="Kojima M."/>
            <person name="Kondo S."/>
            <person name="Konno H."/>
            <person name="Nakano K."/>
            <person name="Ninomiya N."/>
            <person name="Nishio T."/>
            <person name="Okada M."/>
            <person name="Plessy C."/>
            <person name="Shibata K."/>
            <person name="Shiraki T."/>
            <person name="Suzuki S."/>
            <person name="Tagami M."/>
            <person name="Waki K."/>
            <person name="Watahiki A."/>
            <person name="Okamura-Oho Y."/>
            <person name="Suzuki H."/>
            <person name="Kawai J."/>
            <person name="Hayashizaki Y."/>
        </authorList>
    </citation>
    <scope>NUCLEOTIDE SEQUENCE [LARGE SCALE MRNA]</scope>
    <source>
        <strain>C57BL/6J</strain>
        <tissue>Medulla oblongata</tissue>
    </source>
</reference>
<reference key="4">
    <citation type="journal article" date="2004" name="Genome Res.">
        <title>The status, quality, and expansion of the NIH full-length cDNA project: the Mammalian Gene Collection (MGC).</title>
        <authorList>
            <consortium name="The MGC Project Team"/>
        </authorList>
    </citation>
    <scope>NUCLEOTIDE SEQUENCE [LARGE SCALE MRNA]</scope>
    <source>
        <tissue>Eye</tissue>
    </source>
</reference>
<reference key="5">
    <citation type="journal article" date="1999" name="Hum. Mol. Genet.">
        <title>Two murine and human homologs of mab-21, a cell fate determination gene involved in Caenorhabditis elegans neural development.</title>
        <authorList>
            <person name="Mariani M."/>
            <person name="Baldessari D."/>
            <person name="Francisconi S."/>
            <person name="Viggiano L."/>
            <person name="Rocchi M."/>
            <person name="Zappavigna V."/>
            <person name="Malgaretti N."/>
            <person name="Consalez G.G."/>
        </authorList>
    </citation>
    <scope>SUBCELLULAR LOCATION</scope>
    <scope>TISSUE SPECIFICITY</scope>
    <scope>DEVELOPMENTAL STAGE</scope>
</reference>
<reference key="6">
    <citation type="journal article" date="2003" name="Development">
        <title>Cell-autonomous involvement of Mab21l1 is essential for lens placode development.</title>
        <authorList>
            <person name="Yamada R."/>
            <person name="Mizutani-Koseki Y."/>
            <person name="Hasegawa T."/>
            <person name="Osumi N."/>
            <person name="Koseki H."/>
            <person name="Takahashi N."/>
        </authorList>
    </citation>
    <scope>FUNCTION</scope>
    <scope>DISRUPTION PHENOTYPE</scope>
    <scope>DEVELOPMENTAL STAGE</scope>
</reference>
<reference key="7">
    <citation type="journal article" date="2007" name="J. Cell. Physiol.">
        <title>The suppressive effect of myeloid Elf-1-like factor (MEF) in osteogenic differentiation.</title>
        <authorList>
            <person name="Kim Y.-J."/>
            <person name="Kim B.-G."/>
            <person name="Lee S.-J."/>
            <person name="Lee H.-K."/>
            <person name="Lee S.-H."/>
            <person name="Ryoo H.-M."/>
            <person name="Cho J.-Y."/>
        </authorList>
    </citation>
    <scope>INDUCTION</scope>
</reference>
<reference key="8">
    <citation type="journal article" date="2017" name="Differentiation">
        <title>Involvement of the Mab21l1 gene in calvarial osteogenesis.</title>
        <authorList>
            <person name="Nguyen D."/>
            <person name="Yamada R."/>
            <person name="Yoshimitsu N."/>
            <person name="Oguri A."/>
            <person name="Kojima T."/>
            <person name="Takahashi N."/>
        </authorList>
    </citation>
    <scope>DISRUPTION PHENOTYPE</scope>
</reference>
<protein>
    <recommendedName>
        <fullName>Putative nucleotidyltransferase MAB21L1</fullName>
        <ecNumber evidence="9">2.7.7.-</ecNumber>
    </recommendedName>
    <alternativeName>
        <fullName>Protein mab-21-like 1</fullName>
    </alternativeName>
</protein>
<name>MB211_MOUSE</name>